<keyword id="KW-0325">Glycoprotein</keyword>
<keyword id="KW-1185">Reference proteome</keyword>
<keyword id="KW-0964">Secreted</keyword>
<keyword id="KW-0732">Signal</keyword>
<feature type="signal peptide" evidence="1">
    <location>
        <begin position="1"/>
        <end position="23"/>
    </location>
</feature>
<feature type="chain" id="PRO_0000274667" description="Putative serine carboxypeptidase-like 53">
    <location>
        <begin position="24"/>
        <end position="264"/>
    </location>
</feature>
<feature type="glycosylation site" description="N-linked (GlcNAc...) asparagine" evidence="1">
    <location>
        <position position="65"/>
    </location>
</feature>
<feature type="glycosylation site" description="N-linked (GlcNAc...) asparagine" evidence="1">
    <location>
        <position position="101"/>
    </location>
</feature>
<feature type="glycosylation site" description="N-linked (GlcNAc...) asparagine" evidence="1">
    <location>
        <position position="153"/>
    </location>
</feature>
<feature type="glycosylation site" description="N-linked (GlcNAc...) asparagine" evidence="1">
    <location>
        <position position="184"/>
    </location>
</feature>
<evidence type="ECO:0000255" key="1"/>
<evidence type="ECO:0000305" key="2"/>
<dbReference type="EMBL" id="AL163972">
    <property type="protein sequence ID" value="CAB88057.1"/>
    <property type="molecule type" value="Genomic_DNA"/>
</dbReference>
<dbReference type="EMBL" id="CP002686">
    <property type="protein sequence ID" value="AEE79533.1"/>
    <property type="molecule type" value="Genomic_DNA"/>
</dbReference>
<dbReference type="PIR" id="T49055">
    <property type="entry name" value="T49055"/>
</dbReference>
<dbReference type="RefSeq" id="NP_191213.1">
    <property type="nucleotide sequence ID" value="NM_115512.1"/>
</dbReference>
<dbReference type="SMR" id="Q9LXY6"/>
<dbReference type="MEROPS" id="S10.A48"/>
<dbReference type="GlyCosmos" id="Q9LXY6">
    <property type="glycosylation" value="4 sites, No reported glycans"/>
</dbReference>
<dbReference type="GlyGen" id="Q9LXY6">
    <property type="glycosylation" value="4 sites"/>
</dbReference>
<dbReference type="PaxDb" id="3702-AT3G56540.1"/>
<dbReference type="EnsemblPlants" id="AT3G56540.1">
    <property type="protein sequence ID" value="AT3G56540.1"/>
    <property type="gene ID" value="AT3G56540"/>
</dbReference>
<dbReference type="GeneID" id="824821"/>
<dbReference type="Gramene" id="AT3G56540.1">
    <property type="protein sequence ID" value="AT3G56540.1"/>
    <property type="gene ID" value="AT3G56540"/>
</dbReference>
<dbReference type="KEGG" id="ath:AT3G56540"/>
<dbReference type="Araport" id="AT3G56540"/>
<dbReference type="TAIR" id="AT3G56540"/>
<dbReference type="eggNOG" id="KOG1282">
    <property type="taxonomic scope" value="Eukaryota"/>
</dbReference>
<dbReference type="HOGENOM" id="CLU_008523_9_3_1"/>
<dbReference type="InParanoid" id="Q9LXY6"/>
<dbReference type="OMA" id="GRECHFF"/>
<dbReference type="PhylomeDB" id="Q9LXY6"/>
<dbReference type="Proteomes" id="UP000006548">
    <property type="component" value="Chromosome 3"/>
</dbReference>
<dbReference type="GO" id="GO:0005576">
    <property type="term" value="C:extracellular region"/>
    <property type="evidence" value="ECO:0007669"/>
    <property type="project" value="UniProtKB-SubCell"/>
</dbReference>
<dbReference type="GO" id="GO:0004185">
    <property type="term" value="F:serine-type carboxypeptidase activity"/>
    <property type="evidence" value="ECO:0007669"/>
    <property type="project" value="InterPro"/>
</dbReference>
<dbReference type="GO" id="GO:0006508">
    <property type="term" value="P:proteolysis"/>
    <property type="evidence" value="ECO:0007669"/>
    <property type="project" value="InterPro"/>
</dbReference>
<dbReference type="Gene3D" id="3.40.50.1820">
    <property type="entry name" value="alpha/beta hydrolase"/>
    <property type="match status" value="1"/>
</dbReference>
<dbReference type="InterPro" id="IPR029058">
    <property type="entry name" value="AB_hydrolase_fold"/>
</dbReference>
<dbReference type="InterPro" id="IPR001563">
    <property type="entry name" value="Peptidase_S10"/>
</dbReference>
<dbReference type="InterPro" id="IPR018202">
    <property type="entry name" value="Ser_caboxypep_ser_AS"/>
</dbReference>
<dbReference type="PANTHER" id="PTHR11802:SF132">
    <property type="entry name" value="SERINE CARBOXYPEPTIDASE-LIKE 36-RELATED"/>
    <property type="match status" value="1"/>
</dbReference>
<dbReference type="PANTHER" id="PTHR11802">
    <property type="entry name" value="SERINE PROTEASE FAMILY S10 SERINE CARBOXYPEPTIDASE"/>
    <property type="match status" value="1"/>
</dbReference>
<dbReference type="Pfam" id="PF00450">
    <property type="entry name" value="Peptidase_S10"/>
    <property type="match status" value="1"/>
</dbReference>
<dbReference type="PRINTS" id="PR00724">
    <property type="entry name" value="CRBOXYPTASEC"/>
</dbReference>
<dbReference type="SUPFAM" id="SSF53474">
    <property type="entry name" value="alpha/beta-Hydrolases"/>
    <property type="match status" value="1"/>
</dbReference>
<dbReference type="PROSITE" id="PS00131">
    <property type="entry name" value="CARBOXYPEPT_SER_SER"/>
    <property type="match status" value="1"/>
</dbReference>
<organism>
    <name type="scientific">Arabidopsis thaliana</name>
    <name type="common">Mouse-ear cress</name>
    <dbReference type="NCBI Taxonomy" id="3702"/>
    <lineage>
        <taxon>Eukaryota</taxon>
        <taxon>Viridiplantae</taxon>
        <taxon>Streptophyta</taxon>
        <taxon>Embryophyta</taxon>
        <taxon>Tracheophyta</taxon>
        <taxon>Spermatophyta</taxon>
        <taxon>Magnoliopsida</taxon>
        <taxon>eudicotyledons</taxon>
        <taxon>Gunneridae</taxon>
        <taxon>Pentapetalae</taxon>
        <taxon>rosids</taxon>
        <taxon>malvids</taxon>
        <taxon>Brassicales</taxon>
        <taxon>Brassicaceae</taxon>
        <taxon>Camelineae</taxon>
        <taxon>Arabidopsis</taxon>
    </lineage>
</organism>
<name>SCP53_ARATH</name>
<accession>Q9LXY6</accession>
<gene>
    <name type="primary">SCPL53</name>
    <name type="ordered locus">At3g56540</name>
    <name type="ORF">T5P19.190</name>
</gene>
<protein>
    <recommendedName>
        <fullName>Putative serine carboxypeptidase-like 53</fullName>
    </recommendedName>
</protein>
<comment type="subcellular location">
    <subcellularLocation>
        <location evidence="2">Secreted</location>
    </subcellularLocation>
</comment>
<comment type="similarity">
    <text evidence="2">Belongs to the peptidase S10 family.</text>
</comment>
<comment type="caution">
    <text evidence="2">Lacks the second part of the protein and the active site Asp and His residues which is a conserved feature of peptidase S10 family.</text>
</comment>
<comment type="caution">
    <text evidence="2">Could be the product of a pseudogene.</text>
</comment>
<reference key="1">
    <citation type="journal article" date="2000" name="Nature">
        <title>Sequence and analysis of chromosome 3 of the plant Arabidopsis thaliana.</title>
        <authorList>
            <person name="Salanoubat M."/>
            <person name="Lemcke K."/>
            <person name="Rieger M."/>
            <person name="Ansorge W."/>
            <person name="Unseld M."/>
            <person name="Fartmann B."/>
            <person name="Valle G."/>
            <person name="Bloecker H."/>
            <person name="Perez-Alonso M."/>
            <person name="Obermaier B."/>
            <person name="Delseny M."/>
            <person name="Boutry M."/>
            <person name="Grivell L.A."/>
            <person name="Mache R."/>
            <person name="Puigdomenech P."/>
            <person name="De Simone V."/>
            <person name="Choisne N."/>
            <person name="Artiguenave F."/>
            <person name="Robert C."/>
            <person name="Brottier P."/>
            <person name="Wincker P."/>
            <person name="Cattolico L."/>
            <person name="Weissenbach J."/>
            <person name="Saurin W."/>
            <person name="Quetier F."/>
            <person name="Schaefer M."/>
            <person name="Mueller-Auer S."/>
            <person name="Gabel C."/>
            <person name="Fuchs M."/>
            <person name="Benes V."/>
            <person name="Wurmbach E."/>
            <person name="Drzonek H."/>
            <person name="Erfle H."/>
            <person name="Jordan N."/>
            <person name="Bangert S."/>
            <person name="Wiedelmann R."/>
            <person name="Kranz H."/>
            <person name="Voss H."/>
            <person name="Holland R."/>
            <person name="Brandt P."/>
            <person name="Nyakatura G."/>
            <person name="Vezzi A."/>
            <person name="D'Angelo M."/>
            <person name="Pallavicini A."/>
            <person name="Toppo S."/>
            <person name="Simionati B."/>
            <person name="Conrad A."/>
            <person name="Hornischer K."/>
            <person name="Kauer G."/>
            <person name="Loehnert T.-H."/>
            <person name="Nordsiek G."/>
            <person name="Reichelt J."/>
            <person name="Scharfe M."/>
            <person name="Schoen O."/>
            <person name="Bargues M."/>
            <person name="Terol J."/>
            <person name="Climent J."/>
            <person name="Navarro P."/>
            <person name="Collado C."/>
            <person name="Perez-Perez A."/>
            <person name="Ottenwaelder B."/>
            <person name="Duchemin D."/>
            <person name="Cooke R."/>
            <person name="Laudie M."/>
            <person name="Berger-Llauro C."/>
            <person name="Purnelle B."/>
            <person name="Masuy D."/>
            <person name="de Haan M."/>
            <person name="Maarse A.C."/>
            <person name="Alcaraz J.-P."/>
            <person name="Cottet A."/>
            <person name="Casacuberta E."/>
            <person name="Monfort A."/>
            <person name="Argiriou A."/>
            <person name="Flores M."/>
            <person name="Liguori R."/>
            <person name="Vitale D."/>
            <person name="Mannhaupt G."/>
            <person name="Haase D."/>
            <person name="Schoof H."/>
            <person name="Rudd S."/>
            <person name="Zaccaria P."/>
            <person name="Mewes H.-W."/>
            <person name="Mayer K.F.X."/>
            <person name="Kaul S."/>
            <person name="Town C.D."/>
            <person name="Koo H.L."/>
            <person name="Tallon L.J."/>
            <person name="Jenkins J."/>
            <person name="Rooney T."/>
            <person name="Rizzo M."/>
            <person name="Walts A."/>
            <person name="Utterback T."/>
            <person name="Fujii C.Y."/>
            <person name="Shea T.P."/>
            <person name="Creasy T.H."/>
            <person name="Haas B."/>
            <person name="Maiti R."/>
            <person name="Wu D."/>
            <person name="Peterson J."/>
            <person name="Van Aken S."/>
            <person name="Pai G."/>
            <person name="Militscher J."/>
            <person name="Sellers P."/>
            <person name="Gill J.E."/>
            <person name="Feldblyum T.V."/>
            <person name="Preuss D."/>
            <person name="Lin X."/>
            <person name="Nierman W.C."/>
            <person name="Salzberg S.L."/>
            <person name="White O."/>
            <person name="Venter J.C."/>
            <person name="Fraser C.M."/>
            <person name="Kaneko T."/>
            <person name="Nakamura Y."/>
            <person name="Sato S."/>
            <person name="Kato T."/>
            <person name="Asamizu E."/>
            <person name="Sasamoto S."/>
            <person name="Kimura T."/>
            <person name="Idesawa K."/>
            <person name="Kawashima K."/>
            <person name="Kishida Y."/>
            <person name="Kiyokawa C."/>
            <person name="Kohara M."/>
            <person name="Matsumoto M."/>
            <person name="Matsuno A."/>
            <person name="Muraki A."/>
            <person name="Nakayama S."/>
            <person name="Nakazaki N."/>
            <person name="Shinpo S."/>
            <person name="Takeuchi C."/>
            <person name="Wada T."/>
            <person name="Watanabe A."/>
            <person name="Yamada M."/>
            <person name="Yasuda M."/>
            <person name="Tabata S."/>
        </authorList>
    </citation>
    <scope>NUCLEOTIDE SEQUENCE [LARGE SCALE GENOMIC DNA]</scope>
    <source>
        <strain>cv. Columbia</strain>
    </source>
</reference>
<reference key="2">
    <citation type="journal article" date="2017" name="Plant J.">
        <title>Araport11: a complete reannotation of the Arabidopsis thaliana reference genome.</title>
        <authorList>
            <person name="Cheng C.Y."/>
            <person name="Krishnakumar V."/>
            <person name="Chan A.P."/>
            <person name="Thibaud-Nissen F."/>
            <person name="Schobel S."/>
            <person name="Town C.D."/>
        </authorList>
    </citation>
    <scope>GENOME REANNOTATION</scope>
    <source>
        <strain>cv. Columbia</strain>
    </source>
</reference>
<reference key="3">
    <citation type="journal article" date="2005" name="Plant Physiol.">
        <title>An expression and bioinformatics analysis of the Arabidopsis serine carboxypeptidase-like gene family.</title>
        <authorList>
            <person name="Fraser C.M."/>
            <person name="Rider L.W."/>
            <person name="Chapple C."/>
        </authorList>
    </citation>
    <scope>GENE FAMILY</scope>
    <scope>NOMENCLATURE</scope>
</reference>
<sequence length="264" mass="29737">MGKLQDWSITTCLFLFFLHASQTHCTSQSHVRNRLYRSKRGIGSSIDTSHLNAIRRLSVSLSLQNISGVNQQEQKERDLIENLPGQPSVNFKQYGGYVTVNESAGRSLYYYFVEATNTKNSSPLVLWLNGGPGCSSLYGAFQELGPFRVHSDNKTLYTNPYSWNNVANMLFLESPAGTGFSYTNTTTDMENPGDMKTAADNYVFLVKWLERFPEYKGRDFYIAGESYAGHYVQWRHGCGDFGDSYNVRTEDDESNGCYGMASVV</sequence>
<proteinExistence type="uncertain"/>